<keyword id="KW-0150">Chloroplast</keyword>
<keyword id="KW-0472">Membrane</keyword>
<keyword id="KW-0520">NAD</keyword>
<keyword id="KW-0521">NADP</keyword>
<keyword id="KW-0934">Plastid</keyword>
<keyword id="KW-0618">Plastoquinone</keyword>
<keyword id="KW-0874">Quinone</keyword>
<keyword id="KW-0691">RNA editing</keyword>
<keyword id="KW-0793">Thylakoid</keyword>
<keyword id="KW-1278">Translocase</keyword>
<keyword id="KW-0812">Transmembrane</keyword>
<keyword id="KW-1133">Transmembrane helix</keyword>
<keyword id="KW-0813">Transport</keyword>
<gene>
    <name type="primary">ndhG</name>
</gene>
<sequence>MNISELIHDFVLALVELGILLGSLGAVLLVNTVNSAFSLGLVFTCISLLYFVLNADFVAAAQLLVYVGAINVLTVFAVMITDEPAGSETTARGIGYIITAGTCTILFSILSFVIHNTKWSDLSLIPQSGISTSGTLGSNVQQLGYKLLGEFVIPFELLSILLLAALVGAINLARNEDAFIVNKKSAASAPYKNSTFF</sequence>
<organism>
    <name type="scientific">Adiantum capillus-veneris</name>
    <name type="common">Maidenhair fern</name>
    <dbReference type="NCBI Taxonomy" id="13818"/>
    <lineage>
        <taxon>Eukaryota</taxon>
        <taxon>Viridiplantae</taxon>
        <taxon>Streptophyta</taxon>
        <taxon>Embryophyta</taxon>
        <taxon>Tracheophyta</taxon>
        <taxon>Polypodiopsida</taxon>
        <taxon>Polypodiidae</taxon>
        <taxon>Polypodiales</taxon>
        <taxon>Pteridineae</taxon>
        <taxon>Pteridaceae</taxon>
        <taxon>Vittarioideae</taxon>
        <taxon>Adiantum</taxon>
    </lineage>
</organism>
<reference key="1">
    <citation type="journal article" date="2003" name="DNA Res.">
        <title>Complete nucleotide sequence of the chloroplast genome from a leptosporangiate fern, Adiantum capillus-veneris L.</title>
        <authorList>
            <person name="Wolf P.G."/>
            <person name="Rowe C.A."/>
            <person name="Sinclair R.B."/>
            <person name="Hasebe M."/>
        </authorList>
    </citation>
    <scope>NUCLEOTIDE SEQUENCE [LARGE SCALE GENOMIC DNA]</scope>
</reference>
<reference key="2">
    <citation type="journal article" date="2004" name="Gene">
        <title>High levels of RNA editing in a vascular plant chloroplast genome: analysis of transcripts from the fern Adiantum capillus-veneris.</title>
        <authorList>
            <person name="Wolf P.G."/>
            <person name="Rowe C.A."/>
            <person name="Hasebe M."/>
        </authorList>
    </citation>
    <scope>NUCLEOTIDE SEQUENCE [GENOMIC DNA]</scope>
    <scope>RNA EDITING</scope>
    <source>
        <tissue>Frond</tissue>
    </source>
</reference>
<evidence type="ECO:0000250" key="1"/>
<evidence type="ECO:0000255" key="2"/>
<evidence type="ECO:0000269" key="3">
    <source>
    </source>
</evidence>
<evidence type="ECO:0000305" key="4"/>
<geneLocation type="chloroplast"/>
<protein>
    <recommendedName>
        <fullName>NAD(P)H-quinone oxidoreductase subunit 6, chloroplastic</fullName>
        <ecNumber>7.1.1.-</ecNumber>
    </recommendedName>
    <alternativeName>
        <fullName>NAD(P)H dehydrogenase subunit 6</fullName>
    </alternativeName>
    <alternativeName>
        <fullName>NADH-plastoquinone oxidoreductase subunit 6</fullName>
    </alternativeName>
</protein>
<proteinExistence type="evidence at transcript level"/>
<dbReference type="EC" id="7.1.1.-"/>
<dbReference type="EMBL" id="AY178864">
    <property type="protein sequence ID" value="AAP29444.2"/>
    <property type="molecule type" value="Genomic_DNA"/>
</dbReference>
<dbReference type="RefSeq" id="NP_848113.2">
    <property type="nucleotide sequence ID" value="NC_004766.1"/>
</dbReference>
<dbReference type="SMR" id="Q85FH2"/>
<dbReference type="GeneID" id="807444"/>
<dbReference type="GO" id="GO:0009535">
    <property type="term" value="C:chloroplast thylakoid membrane"/>
    <property type="evidence" value="ECO:0007669"/>
    <property type="project" value="UniProtKB-SubCell"/>
</dbReference>
<dbReference type="GO" id="GO:0008137">
    <property type="term" value="F:NADH dehydrogenase (ubiquinone) activity"/>
    <property type="evidence" value="ECO:0007669"/>
    <property type="project" value="InterPro"/>
</dbReference>
<dbReference type="GO" id="GO:0048038">
    <property type="term" value="F:quinone binding"/>
    <property type="evidence" value="ECO:0007669"/>
    <property type="project" value="UniProtKB-KW"/>
</dbReference>
<dbReference type="Gene3D" id="1.20.120.1200">
    <property type="entry name" value="NADH-ubiquinone/plastoquinone oxidoreductase chain 6, subunit NuoJ"/>
    <property type="match status" value="1"/>
</dbReference>
<dbReference type="InterPro" id="IPR001457">
    <property type="entry name" value="NADH_UbQ/plastoQ_OxRdtase_su6"/>
</dbReference>
<dbReference type="InterPro" id="IPR042106">
    <property type="entry name" value="Nuo/plastoQ_OxRdtase_6_NuoJ"/>
</dbReference>
<dbReference type="PANTHER" id="PTHR33269">
    <property type="entry name" value="NADH-UBIQUINONE OXIDOREDUCTASE CHAIN 6"/>
    <property type="match status" value="1"/>
</dbReference>
<dbReference type="PANTHER" id="PTHR33269:SF17">
    <property type="entry name" value="NADH-UBIQUINONE OXIDOREDUCTASE CHAIN 6"/>
    <property type="match status" value="1"/>
</dbReference>
<dbReference type="Pfam" id="PF00499">
    <property type="entry name" value="Oxidored_q3"/>
    <property type="match status" value="1"/>
</dbReference>
<comment type="function">
    <text evidence="1">NDH shuttles electrons from NAD(P)H:plastoquinone, via FMN and iron-sulfur (Fe-S) centers, to quinones in the photosynthetic chain and possibly in a chloroplast respiratory chain. The immediate electron acceptor for the enzyme in this species is believed to be plastoquinone. Couples the redox reaction to proton translocation, and thus conserves the redox energy in a proton gradient (By similarity).</text>
</comment>
<comment type="catalytic activity">
    <reaction>
        <text>a plastoquinone + NADH + (n+1) H(+)(in) = a plastoquinol + NAD(+) + n H(+)(out)</text>
        <dbReference type="Rhea" id="RHEA:42608"/>
        <dbReference type="Rhea" id="RHEA-COMP:9561"/>
        <dbReference type="Rhea" id="RHEA-COMP:9562"/>
        <dbReference type="ChEBI" id="CHEBI:15378"/>
        <dbReference type="ChEBI" id="CHEBI:17757"/>
        <dbReference type="ChEBI" id="CHEBI:57540"/>
        <dbReference type="ChEBI" id="CHEBI:57945"/>
        <dbReference type="ChEBI" id="CHEBI:62192"/>
    </reaction>
</comment>
<comment type="catalytic activity">
    <reaction>
        <text>a plastoquinone + NADPH + (n+1) H(+)(in) = a plastoquinol + NADP(+) + n H(+)(out)</text>
        <dbReference type="Rhea" id="RHEA:42612"/>
        <dbReference type="Rhea" id="RHEA-COMP:9561"/>
        <dbReference type="Rhea" id="RHEA-COMP:9562"/>
        <dbReference type="ChEBI" id="CHEBI:15378"/>
        <dbReference type="ChEBI" id="CHEBI:17757"/>
        <dbReference type="ChEBI" id="CHEBI:57783"/>
        <dbReference type="ChEBI" id="CHEBI:58349"/>
        <dbReference type="ChEBI" id="CHEBI:62192"/>
    </reaction>
</comment>
<comment type="subunit">
    <text evidence="1">NDH is composed of at least 16 different subunits, 5 of which are encoded in the nucleus.</text>
</comment>
<comment type="subcellular location">
    <subcellularLocation>
        <location evidence="1">Plastid</location>
        <location evidence="1">Chloroplast thylakoid membrane</location>
        <topology evidence="1">Multi-pass membrane protein</topology>
    </subcellularLocation>
</comment>
<comment type="RNA editing">
    <location>
        <position position="1" evidence="3"/>
    </location>
    <location>
        <position position="14" evidence="3"/>
    </location>
    <location>
        <position position="28" evidence="3"/>
    </location>
    <location>
        <position position="39" evidence="3"/>
    </location>
    <location>
        <position position="41" evidence="3"/>
    </location>
    <location>
        <position position="53" evidence="3"/>
    </location>
    <location>
        <position position="64" evidence="3"/>
    </location>
    <location>
        <position position="79" evidence="3"/>
    </location>
    <location>
        <position position="109" evidence="3"/>
    </location>
    <location>
        <position position="120" evidence="3"/>
    </location>
    <text>The initiator methionine is created by RNA editing.</text>
</comment>
<comment type="similarity">
    <text evidence="4">Belongs to the complex I subunit 6 family.</text>
</comment>
<accession>Q85FH2</accession>
<feature type="chain" id="PRO_0000118350" description="NAD(P)H-quinone oxidoreductase subunit 6, chloroplastic">
    <location>
        <begin position="1"/>
        <end position="197"/>
    </location>
</feature>
<feature type="transmembrane region" description="Helical" evidence="2">
    <location>
        <begin position="10"/>
        <end position="30"/>
    </location>
</feature>
<feature type="transmembrane region" description="Helical" evidence="2">
    <location>
        <begin position="39"/>
        <end position="59"/>
    </location>
</feature>
<feature type="transmembrane region" description="Helical" evidence="2">
    <location>
        <begin position="60"/>
        <end position="80"/>
    </location>
</feature>
<feature type="transmembrane region" description="Helical" evidence="2">
    <location>
        <begin position="94"/>
        <end position="114"/>
    </location>
</feature>
<feature type="transmembrane region" description="Helical" evidence="2">
    <location>
        <begin position="147"/>
        <end position="167"/>
    </location>
</feature>
<name>NU6C_ADICA</name>